<dbReference type="EMBL" id="CP000142">
    <property type="protein sequence ID" value="ABA87950.1"/>
    <property type="molecule type" value="Genomic_DNA"/>
</dbReference>
<dbReference type="RefSeq" id="WP_011340393.1">
    <property type="nucleotide sequence ID" value="NC_007498.2"/>
</dbReference>
<dbReference type="SMR" id="Q3A6Q7"/>
<dbReference type="STRING" id="338963.Pcar_0691"/>
<dbReference type="KEGG" id="pca:Pcar_0691"/>
<dbReference type="eggNOG" id="COG0081">
    <property type="taxonomic scope" value="Bacteria"/>
</dbReference>
<dbReference type="HOGENOM" id="CLU_062853_0_0_7"/>
<dbReference type="OrthoDB" id="9803740at2"/>
<dbReference type="Proteomes" id="UP000002534">
    <property type="component" value="Chromosome"/>
</dbReference>
<dbReference type="GO" id="GO:0022625">
    <property type="term" value="C:cytosolic large ribosomal subunit"/>
    <property type="evidence" value="ECO:0007669"/>
    <property type="project" value="TreeGrafter"/>
</dbReference>
<dbReference type="GO" id="GO:0019843">
    <property type="term" value="F:rRNA binding"/>
    <property type="evidence" value="ECO:0007669"/>
    <property type="project" value="UniProtKB-UniRule"/>
</dbReference>
<dbReference type="GO" id="GO:0003735">
    <property type="term" value="F:structural constituent of ribosome"/>
    <property type="evidence" value="ECO:0007669"/>
    <property type="project" value="InterPro"/>
</dbReference>
<dbReference type="GO" id="GO:0000049">
    <property type="term" value="F:tRNA binding"/>
    <property type="evidence" value="ECO:0007669"/>
    <property type="project" value="UniProtKB-KW"/>
</dbReference>
<dbReference type="GO" id="GO:0006417">
    <property type="term" value="P:regulation of translation"/>
    <property type="evidence" value="ECO:0007669"/>
    <property type="project" value="UniProtKB-KW"/>
</dbReference>
<dbReference type="GO" id="GO:0006412">
    <property type="term" value="P:translation"/>
    <property type="evidence" value="ECO:0007669"/>
    <property type="project" value="UniProtKB-UniRule"/>
</dbReference>
<dbReference type="CDD" id="cd00403">
    <property type="entry name" value="Ribosomal_L1"/>
    <property type="match status" value="1"/>
</dbReference>
<dbReference type="FunFam" id="3.40.50.790:FF:000001">
    <property type="entry name" value="50S ribosomal protein L1"/>
    <property type="match status" value="1"/>
</dbReference>
<dbReference type="Gene3D" id="3.30.190.20">
    <property type="match status" value="1"/>
</dbReference>
<dbReference type="Gene3D" id="3.40.50.790">
    <property type="match status" value="1"/>
</dbReference>
<dbReference type="HAMAP" id="MF_01318_B">
    <property type="entry name" value="Ribosomal_uL1_B"/>
    <property type="match status" value="1"/>
</dbReference>
<dbReference type="InterPro" id="IPR005878">
    <property type="entry name" value="Ribosom_uL1_bac-type"/>
</dbReference>
<dbReference type="InterPro" id="IPR002143">
    <property type="entry name" value="Ribosomal_uL1"/>
</dbReference>
<dbReference type="InterPro" id="IPR023674">
    <property type="entry name" value="Ribosomal_uL1-like"/>
</dbReference>
<dbReference type="InterPro" id="IPR028364">
    <property type="entry name" value="Ribosomal_uL1/biogenesis"/>
</dbReference>
<dbReference type="InterPro" id="IPR016095">
    <property type="entry name" value="Ribosomal_uL1_3-a/b-sand"/>
</dbReference>
<dbReference type="InterPro" id="IPR023673">
    <property type="entry name" value="Ribosomal_uL1_CS"/>
</dbReference>
<dbReference type="NCBIfam" id="TIGR01169">
    <property type="entry name" value="rplA_bact"/>
    <property type="match status" value="1"/>
</dbReference>
<dbReference type="PANTHER" id="PTHR36427">
    <property type="entry name" value="54S RIBOSOMAL PROTEIN L1, MITOCHONDRIAL"/>
    <property type="match status" value="1"/>
</dbReference>
<dbReference type="PANTHER" id="PTHR36427:SF3">
    <property type="entry name" value="LARGE RIBOSOMAL SUBUNIT PROTEIN UL1M"/>
    <property type="match status" value="1"/>
</dbReference>
<dbReference type="Pfam" id="PF00687">
    <property type="entry name" value="Ribosomal_L1"/>
    <property type="match status" value="1"/>
</dbReference>
<dbReference type="PIRSF" id="PIRSF002155">
    <property type="entry name" value="Ribosomal_L1"/>
    <property type="match status" value="1"/>
</dbReference>
<dbReference type="SUPFAM" id="SSF56808">
    <property type="entry name" value="Ribosomal protein L1"/>
    <property type="match status" value="1"/>
</dbReference>
<dbReference type="PROSITE" id="PS01199">
    <property type="entry name" value="RIBOSOMAL_L1"/>
    <property type="match status" value="1"/>
</dbReference>
<evidence type="ECO:0000255" key="1">
    <source>
        <dbReference type="HAMAP-Rule" id="MF_01318"/>
    </source>
</evidence>
<evidence type="ECO:0000305" key="2"/>
<proteinExistence type="inferred from homology"/>
<reference key="1">
    <citation type="submission" date="2005-10" db="EMBL/GenBank/DDBJ databases">
        <title>Complete sequence of Pelobacter carbinolicus DSM 2380.</title>
        <authorList>
            <person name="Copeland A."/>
            <person name="Lucas S."/>
            <person name="Lapidus A."/>
            <person name="Barry K."/>
            <person name="Detter J.C."/>
            <person name="Glavina T."/>
            <person name="Hammon N."/>
            <person name="Israni S."/>
            <person name="Pitluck S."/>
            <person name="Chertkov O."/>
            <person name="Schmutz J."/>
            <person name="Larimer F."/>
            <person name="Land M."/>
            <person name="Kyrpides N."/>
            <person name="Ivanova N."/>
            <person name="Richardson P."/>
        </authorList>
    </citation>
    <scope>NUCLEOTIDE SEQUENCE [LARGE SCALE GENOMIC DNA]</scope>
    <source>
        <strain>DSM 2380 / NBRC 103641 / GraBd1</strain>
    </source>
</reference>
<comment type="function">
    <text evidence="1">Binds directly to 23S rRNA. The L1 stalk is quite mobile in the ribosome, and is involved in E site tRNA release.</text>
</comment>
<comment type="function">
    <text evidence="1">Protein L1 is also a translational repressor protein, it controls the translation of the L11 operon by binding to its mRNA.</text>
</comment>
<comment type="subunit">
    <text evidence="1">Part of the 50S ribosomal subunit.</text>
</comment>
<comment type="similarity">
    <text evidence="1">Belongs to the universal ribosomal protein uL1 family.</text>
</comment>
<keyword id="KW-1185">Reference proteome</keyword>
<keyword id="KW-0678">Repressor</keyword>
<keyword id="KW-0687">Ribonucleoprotein</keyword>
<keyword id="KW-0689">Ribosomal protein</keyword>
<keyword id="KW-0694">RNA-binding</keyword>
<keyword id="KW-0699">rRNA-binding</keyword>
<keyword id="KW-0810">Translation regulation</keyword>
<keyword id="KW-0820">tRNA-binding</keyword>
<name>RL1_SYNC1</name>
<feature type="chain" id="PRO_0000230621" description="Large ribosomal subunit protein uL1">
    <location>
        <begin position="1"/>
        <end position="233"/>
    </location>
</feature>
<sequence length="233" mass="24803">MSIGKLHKQAKEKVDRSQVYPIGEALALVKEVAHAKFDETVEISVRLGVDPRKADQMVRGAVVLPNGLGKDVKVLVFAKGEKAIEAKEAGADYVGGDDLVAKIQEGWFDFDTAIATPDMMGTVGKIGRLLGPRGLMPNPKVGTVTFEVGKATSEAKSGKVEYRVEKAGIVHAPVGKVSFDAEKLQENLVALFDALVKAKPATAKGTYFKKMSLSSTMGPGINVDLPTVQALVK</sequence>
<protein>
    <recommendedName>
        <fullName evidence="1">Large ribosomal subunit protein uL1</fullName>
    </recommendedName>
    <alternativeName>
        <fullName evidence="2">50S ribosomal protein L1</fullName>
    </alternativeName>
</protein>
<gene>
    <name evidence="1" type="primary">rplA</name>
    <name type="ordered locus">Pcar_0691</name>
</gene>
<accession>Q3A6Q7</accession>
<organism>
    <name type="scientific">Syntrophotalea carbinolica (strain DSM 2380 / NBRC 103641 / GraBd1)</name>
    <name type="common">Pelobacter carbinolicus</name>
    <dbReference type="NCBI Taxonomy" id="338963"/>
    <lineage>
        <taxon>Bacteria</taxon>
        <taxon>Pseudomonadati</taxon>
        <taxon>Thermodesulfobacteriota</taxon>
        <taxon>Desulfuromonadia</taxon>
        <taxon>Desulfuromonadales</taxon>
        <taxon>Syntrophotaleaceae</taxon>
        <taxon>Syntrophotalea</taxon>
    </lineage>
</organism>